<reference key="1">
    <citation type="journal article" date="2001" name="DNA Res.">
        <title>Complete genome sequence of an aerobic thermoacidophilic Crenarchaeon, Sulfolobus tokodaii strain7.</title>
        <authorList>
            <person name="Kawarabayasi Y."/>
            <person name="Hino Y."/>
            <person name="Horikawa H."/>
            <person name="Jin-no K."/>
            <person name="Takahashi M."/>
            <person name="Sekine M."/>
            <person name="Baba S."/>
            <person name="Ankai A."/>
            <person name="Kosugi H."/>
            <person name="Hosoyama A."/>
            <person name="Fukui S."/>
            <person name="Nagai Y."/>
            <person name="Nishijima K."/>
            <person name="Otsuka R."/>
            <person name="Nakazawa H."/>
            <person name="Takamiya M."/>
            <person name="Kato Y."/>
            <person name="Yoshizawa T."/>
            <person name="Tanaka T."/>
            <person name="Kudoh Y."/>
            <person name="Yamazaki J."/>
            <person name="Kushida N."/>
            <person name="Oguchi A."/>
            <person name="Aoki K."/>
            <person name="Masuda S."/>
            <person name="Yanagii M."/>
            <person name="Nishimura M."/>
            <person name="Yamagishi A."/>
            <person name="Oshima T."/>
            <person name="Kikuchi H."/>
        </authorList>
    </citation>
    <scope>NUCLEOTIDE SEQUENCE [LARGE SCALE GENOMIC DNA]</scope>
    <source>
        <strain>DSM 16993 / JCM 10545 / NBRC 100140 / 7</strain>
    </source>
</reference>
<keyword id="KW-0067">ATP-binding</keyword>
<keyword id="KW-0169">Cobalamin biosynthesis</keyword>
<keyword id="KW-0315">Glutamine amidotransferase</keyword>
<keyword id="KW-0436">Ligase</keyword>
<keyword id="KW-0460">Magnesium</keyword>
<keyword id="KW-0547">Nucleotide-binding</keyword>
<keyword id="KW-1185">Reference proteome</keyword>
<protein>
    <recommendedName>
        <fullName evidence="1">Cobyrinate a,c-diamide synthase</fullName>
        <ecNumber evidence="1">6.3.5.11</ecNumber>
    </recommendedName>
    <alternativeName>
        <fullName evidence="1">Cobyrinic acid a,c-diamide synthetase</fullName>
    </alternativeName>
</protein>
<sequence>MRFPRIIISSDRSNSGKTIISSALMRVLSRKMKVRGFKAGPDFIDPKYHTLAARVPSINLDLWLMGIEGVKKSLIRYGKGYDIGIIEGVMGLYDGINVNYSTYELSEVTKTPIILVVNCSNVSSTVGAIVKGLKDYRNARIRGVIFNQIGSETHYNYCKSSIKEVQVLGYIKYDRNFSVPSRHLGLFTTEDFKETENVLQSVSKAIEESVDIDKIIEIANSAEELQEVDEAISNDELDTKKGIAAIAYDSAFNFYYSENIDLLRYKYQIEFFSPLLNEKIDNPSLIYVGGGYPELHLNELEKSSSTIRWIKKEAEKGTKILAECGGLMYLSKEIIADKSYKMVNLFDISIKAKDKLTIGYTELDVLSDNILGRKGEVLRGHEFHVSKAINLGNDVKFSMKNRIGKGIWENKDGAIVYNTLASYSHFHFSSARGLLSF</sequence>
<gene>
    <name evidence="1" type="primary">cbiA</name>
    <name type="ordered locus">STK_03890</name>
</gene>
<name>CBIA_SULTO</name>
<accession>Q975N0</accession>
<feature type="chain" id="PRO_0000141281" description="Cobyrinate a,c-diamide synthase">
    <location>
        <begin position="1"/>
        <end position="437"/>
    </location>
</feature>
<feature type="domain" description="GATase cobBQ-type" evidence="1">
    <location>
        <begin position="243"/>
        <end position="433"/>
    </location>
</feature>
<feature type="active site" description="Nucleophile" evidence="1">
    <location>
        <position position="324"/>
    </location>
</feature>
<feature type="site" description="Increases nucleophilicity of active site Cys" evidence="1">
    <location>
        <position position="425"/>
    </location>
</feature>
<dbReference type="EC" id="6.3.5.11" evidence="1"/>
<dbReference type="EMBL" id="BA000023">
    <property type="protein sequence ID" value="BAB65370.1"/>
    <property type="molecule type" value="Genomic_DNA"/>
</dbReference>
<dbReference type="RefSeq" id="WP_010978353.1">
    <property type="nucleotide sequence ID" value="NC_003106.2"/>
</dbReference>
<dbReference type="SMR" id="Q975N0"/>
<dbReference type="STRING" id="273063.STK_03890"/>
<dbReference type="GeneID" id="1458314"/>
<dbReference type="KEGG" id="sto:STK_03890"/>
<dbReference type="PATRIC" id="fig|273063.9.peg.450"/>
<dbReference type="eggNOG" id="arCOG00106">
    <property type="taxonomic scope" value="Archaea"/>
</dbReference>
<dbReference type="OrthoDB" id="8896at2157"/>
<dbReference type="UniPathway" id="UPA00148">
    <property type="reaction ID" value="UER00231"/>
</dbReference>
<dbReference type="Proteomes" id="UP000001015">
    <property type="component" value="Chromosome"/>
</dbReference>
<dbReference type="GO" id="GO:0005524">
    <property type="term" value="F:ATP binding"/>
    <property type="evidence" value="ECO:0007669"/>
    <property type="project" value="UniProtKB-UniRule"/>
</dbReference>
<dbReference type="GO" id="GO:0042242">
    <property type="term" value="F:cobyrinic acid a,c-diamide synthase activity"/>
    <property type="evidence" value="ECO:0007669"/>
    <property type="project" value="UniProtKB-UniRule"/>
</dbReference>
<dbReference type="GO" id="GO:0009236">
    <property type="term" value="P:cobalamin biosynthetic process"/>
    <property type="evidence" value="ECO:0007669"/>
    <property type="project" value="UniProtKB-UniRule"/>
</dbReference>
<dbReference type="CDD" id="cd03130">
    <property type="entry name" value="GATase1_CobB"/>
    <property type="match status" value="1"/>
</dbReference>
<dbReference type="Gene3D" id="3.40.50.300">
    <property type="entry name" value="P-loop containing nucleotide triphosphate hydrolases"/>
    <property type="match status" value="1"/>
</dbReference>
<dbReference type="HAMAP" id="MF_00027">
    <property type="entry name" value="CobB_CbiA"/>
    <property type="match status" value="1"/>
</dbReference>
<dbReference type="InterPro" id="IPR004484">
    <property type="entry name" value="CbiA/CobB_synth"/>
</dbReference>
<dbReference type="InterPro" id="IPR029062">
    <property type="entry name" value="Class_I_gatase-like"/>
</dbReference>
<dbReference type="InterPro" id="IPR002586">
    <property type="entry name" value="CobQ/CobB/MinD/ParA_Nub-bd_dom"/>
</dbReference>
<dbReference type="InterPro" id="IPR011698">
    <property type="entry name" value="GATase_3"/>
</dbReference>
<dbReference type="InterPro" id="IPR027417">
    <property type="entry name" value="P-loop_NTPase"/>
</dbReference>
<dbReference type="NCBIfam" id="TIGR00379">
    <property type="entry name" value="cobB"/>
    <property type="match status" value="1"/>
</dbReference>
<dbReference type="NCBIfam" id="NF002204">
    <property type="entry name" value="PRK01077.1"/>
    <property type="match status" value="1"/>
</dbReference>
<dbReference type="PANTHER" id="PTHR43873">
    <property type="entry name" value="COBYRINATE A,C-DIAMIDE SYNTHASE"/>
    <property type="match status" value="1"/>
</dbReference>
<dbReference type="PANTHER" id="PTHR43873:SF1">
    <property type="entry name" value="COBYRINATE A,C-DIAMIDE SYNTHASE"/>
    <property type="match status" value="1"/>
</dbReference>
<dbReference type="Pfam" id="PF01656">
    <property type="entry name" value="CbiA"/>
    <property type="match status" value="1"/>
</dbReference>
<dbReference type="Pfam" id="PF07685">
    <property type="entry name" value="GATase_3"/>
    <property type="match status" value="1"/>
</dbReference>
<dbReference type="SUPFAM" id="SSF52317">
    <property type="entry name" value="Class I glutamine amidotransferase-like"/>
    <property type="match status" value="1"/>
</dbReference>
<dbReference type="SUPFAM" id="SSF52540">
    <property type="entry name" value="P-loop containing nucleoside triphosphate hydrolases"/>
    <property type="match status" value="1"/>
</dbReference>
<dbReference type="PROSITE" id="PS51274">
    <property type="entry name" value="GATASE_COBBQ"/>
    <property type="match status" value="1"/>
</dbReference>
<organism>
    <name type="scientific">Sulfurisphaera tokodaii (strain DSM 16993 / JCM 10545 / NBRC 100140 / 7)</name>
    <name type="common">Sulfolobus tokodaii</name>
    <dbReference type="NCBI Taxonomy" id="273063"/>
    <lineage>
        <taxon>Archaea</taxon>
        <taxon>Thermoproteota</taxon>
        <taxon>Thermoprotei</taxon>
        <taxon>Sulfolobales</taxon>
        <taxon>Sulfolobaceae</taxon>
        <taxon>Sulfurisphaera</taxon>
    </lineage>
</organism>
<evidence type="ECO:0000255" key="1">
    <source>
        <dbReference type="HAMAP-Rule" id="MF_00027"/>
    </source>
</evidence>
<comment type="function">
    <text evidence="1">Catalyzes the ATP-dependent amidation of the two carboxylate groups at positions a and c of cobyrinate, using either L-glutamine or ammonia as the nitrogen source.</text>
</comment>
<comment type="catalytic activity">
    <reaction evidence="1">
        <text>cob(II)yrinate + 2 L-glutamine + 2 ATP + 2 H2O = cob(II)yrinate a,c diamide + 2 L-glutamate + 2 ADP + 2 phosphate + 2 H(+)</text>
        <dbReference type="Rhea" id="RHEA:26289"/>
        <dbReference type="ChEBI" id="CHEBI:15377"/>
        <dbReference type="ChEBI" id="CHEBI:15378"/>
        <dbReference type="ChEBI" id="CHEBI:29985"/>
        <dbReference type="ChEBI" id="CHEBI:30616"/>
        <dbReference type="ChEBI" id="CHEBI:43474"/>
        <dbReference type="ChEBI" id="CHEBI:58359"/>
        <dbReference type="ChEBI" id="CHEBI:58537"/>
        <dbReference type="ChEBI" id="CHEBI:58894"/>
        <dbReference type="ChEBI" id="CHEBI:456216"/>
        <dbReference type="EC" id="6.3.5.11"/>
    </reaction>
</comment>
<comment type="cofactor">
    <cofactor evidence="1">
        <name>Mg(2+)</name>
        <dbReference type="ChEBI" id="CHEBI:18420"/>
    </cofactor>
</comment>
<comment type="pathway">
    <text evidence="1">Cofactor biosynthesis; adenosylcobalamin biosynthesis; cob(II)yrinate a,c-diamide from sirohydrochlorin (anaerobic route): step 10/10.</text>
</comment>
<comment type="domain">
    <text evidence="1">Comprises of two domains. The C-terminal domain contains the binding site for glutamine and catalyzes the hydrolysis of this substrate to glutamate and ammonia. The N-terminal domain is anticipated to bind ATP and cobyrinate and catalyzes the ultimate synthesis of the diamide product. The ammonia produced via the glutaminase domain is probably translocated to the adjacent domain via a molecular tunnel, where it reacts with an activated intermediate.</text>
</comment>
<comment type="miscellaneous">
    <text evidence="1">The a and c carboxylates of cobyrinate are activated for nucleophilic attack via formation of a phosphorylated intermediate by ATP. CbiA catalyzes first the amidation of the c-carboxylate, and then that of the a-carboxylate.</text>
</comment>
<comment type="similarity">
    <text evidence="1">Belongs to the CobB/CbiA family.</text>
</comment>
<proteinExistence type="inferred from homology"/>